<feature type="chain" id="PRO_1000075141" description="Elongation factor 4">
    <location>
        <begin position="1"/>
        <end position="602"/>
    </location>
</feature>
<feature type="domain" description="tr-type G">
    <location>
        <begin position="6"/>
        <end position="188"/>
    </location>
</feature>
<feature type="binding site" evidence="1">
    <location>
        <begin position="18"/>
        <end position="23"/>
    </location>
    <ligand>
        <name>GTP</name>
        <dbReference type="ChEBI" id="CHEBI:37565"/>
    </ligand>
</feature>
<feature type="binding site" evidence="1">
    <location>
        <begin position="135"/>
        <end position="138"/>
    </location>
    <ligand>
        <name>GTP</name>
        <dbReference type="ChEBI" id="CHEBI:37565"/>
    </ligand>
</feature>
<accession>A5D3X6</accession>
<organism>
    <name type="scientific">Pelotomaculum thermopropionicum (strain DSM 13744 / JCM 10971 / SI)</name>
    <dbReference type="NCBI Taxonomy" id="370438"/>
    <lineage>
        <taxon>Bacteria</taxon>
        <taxon>Bacillati</taxon>
        <taxon>Bacillota</taxon>
        <taxon>Clostridia</taxon>
        <taxon>Eubacteriales</taxon>
        <taxon>Desulfotomaculaceae</taxon>
        <taxon>Pelotomaculum</taxon>
    </lineage>
</organism>
<proteinExistence type="inferred from homology"/>
<comment type="function">
    <text evidence="1">Required for accurate and efficient protein synthesis under certain stress conditions. May act as a fidelity factor of the translation reaction, by catalyzing a one-codon backward translocation of tRNAs on improperly translocated ribosomes. Back-translocation proceeds from a post-translocation (POST) complex to a pre-translocation (PRE) complex, thus giving elongation factor G a second chance to translocate the tRNAs correctly. Binds to ribosomes in a GTP-dependent manner.</text>
</comment>
<comment type="catalytic activity">
    <reaction evidence="1">
        <text>GTP + H2O = GDP + phosphate + H(+)</text>
        <dbReference type="Rhea" id="RHEA:19669"/>
        <dbReference type="ChEBI" id="CHEBI:15377"/>
        <dbReference type="ChEBI" id="CHEBI:15378"/>
        <dbReference type="ChEBI" id="CHEBI:37565"/>
        <dbReference type="ChEBI" id="CHEBI:43474"/>
        <dbReference type="ChEBI" id="CHEBI:58189"/>
        <dbReference type="EC" id="3.6.5.n1"/>
    </reaction>
</comment>
<comment type="subcellular location">
    <subcellularLocation>
        <location evidence="1">Cell membrane</location>
        <topology evidence="1">Peripheral membrane protein</topology>
        <orientation evidence="1">Cytoplasmic side</orientation>
    </subcellularLocation>
</comment>
<comment type="similarity">
    <text evidence="1">Belongs to the TRAFAC class translation factor GTPase superfamily. Classic translation factor GTPase family. LepA subfamily.</text>
</comment>
<dbReference type="EC" id="3.6.5.n1" evidence="1"/>
<dbReference type="EMBL" id="AP009389">
    <property type="protein sequence ID" value="BAF59054.1"/>
    <property type="molecule type" value="Genomic_DNA"/>
</dbReference>
<dbReference type="SMR" id="A5D3X6"/>
<dbReference type="STRING" id="370438.PTH_0873"/>
<dbReference type="KEGG" id="pth:PTH_0873"/>
<dbReference type="eggNOG" id="COG0481">
    <property type="taxonomic scope" value="Bacteria"/>
</dbReference>
<dbReference type="HOGENOM" id="CLU_009995_3_3_9"/>
<dbReference type="Proteomes" id="UP000006556">
    <property type="component" value="Chromosome"/>
</dbReference>
<dbReference type="GO" id="GO:0005886">
    <property type="term" value="C:plasma membrane"/>
    <property type="evidence" value="ECO:0007669"/>
    <property type="project" value="UniProtKB-SubCell"/>
</dbReference>
<dbReference type="GO" id="GO:0005525">
    <property type="term" value="F:GTP binding"/>
    <property type="evidence" value="ECO:0007669"/>
    <property type="project" value="UniProtKB-UniRule"/>
</dbReference>
<dbReference type="GO" id="GO:0003924">
    <property type="term" value="F:GTPase activity"/>
    <property type="evidence" value="ECO:0007669"/>
    <property type="project" value="UniProtKB-UniRule"/>
</dbReference>
<dbReference type="GO" id="GO:0043022">
    <property type="term" value="F:ribosome binding"/>
    <property type="evidence" value="ECO:0007669"/>
    <property type="project" value="UniProtKB-UniRule"/>
</dbReference>
<dbReference type="GO" id="GO:0003746">
    <property type="term" value="F:translation elongation factor activity"/>
    <property type="evidence" value="ECO:0007669"/>
    <property type="project" value="UniProtKB-UniRule"/>
</dbReference>
<dbReference type="GO" id="GO:0045727">
    <property type="term" value="P:positive regulation of translation"/>
    <property type="evidence" value="ECO:0007669"/>
    <property type="project" value="UniProtKB-UniRule"/>
</dbReference>
<dbReference type="CDD" id="cd03699">
    <property type="entry name" value="EF4_II"/>
    <property type="match status" value="1"/>
</dbReference>
<dbReference type="CDD" id="cd16260">
    <property type="entry name" value="EF4_III"/>
    <property type="match status" value="1"/>
</dbReference>
<dbReference type="CDD" id="cd01890">
    <property type="entry name" value="LepA"/>
    <property type="match status" value="1"/>
</dbReference>
<dbReference type="CDD" id="cd03709">
    <property type="entry name" value="lepA_C"/>
    <property type="match status" value="1"/>
</dbReference>
<dbReference type="FunFam" id="3.40.50.300:FF:000078">
    <property type="entry name" value="Elongation factor 4"/>
    <property type="match status" value="1"/>
</dbReference>
<dbReference type="FunFam" id="2.40.30.10:FF:000015">
    <property type="entry name" value="Translation factor GUF1, mitochondrial"/>
    <property type="match status" value="1"/>
</dbReference>
<dbReference type="FunFam" id="3.30.70.240:FF:000007">
    <property type="entry name" value="Translation factor GUF1, mitochondrial"/>
    <property type="match status" value="1"/>
</dbReference>
<dbReference type="FunFam" id="3.30.70.2570:FF:000001">
    <property type="entry name" value="Translation factor GUF1, mitochondrial"/>
    <property type="match status" value="1"/>
</dbReference>
<dbReference type="FunFam" id="3.30.70.870:FF:000004">
    <property type="entry name" value="Translation factor GUF1, mitochondrial"/>
    <property type="match status" value="1"/>
</dbReference>
<dbReference type="Gene3D" id="3.30.70.240">
    <property type="match status" value="1"/>
</dbReference>
<dbReference type="Gene3D" id="3.30.70.2570">
    <property type="entry name" value="Elongation factor 4, C-terminal domain"/>
    <property type="match status" value="1"/>
</dbReference>
<dbReference type="Gene3D" id="3.30.70.870">
    <property type="entry name" value="Elongation Factor G (Translational Gtpase), domain 3"/>
    <property type="match status" value="1"/>
</dbReference>
<dbReference type="Gene3D" id="3.40.50.300">
    <property type="entry name" value="P-loop containing nucleotide triphosphate hydrolases"/>
    <property type="match status" value="1"/>
</dbReference>
<dbReference type="Gene3D" id="2.40.30.10">
    <property type="entry name" value="Translation factors"/>
    <property type="match status" value="1"/>
</dbReference>
<dbReference type="HAMAP" id="MF_00071">
    <property type="entry name" value="LepA"/>
    <property type="match status" value="1"/>
</dbReference>
<dbReference type="InterPro" id="IPR006297">
    <property type="entry name" value="EF-4"/>
</dbReference>
<dbReference type="InterPro" id="IPR041095">
    <property type="entry name" value="EFG_II"/>
</dbReference>
<dbReference type="InterPro" id="IPR035647">
    <property type="entry name" value="EFG_III/V"/>
</dbReference>
<dbReference type="InterPro" id="IPR000640">
    <property type="entry name" value="EFG_V-like"/>
</dbReference>
<dbReference type="InterPro" id="IPR004161">
    <property type="entry name" value="EFTu-like_2"/>
</dbReference>
<dbReference type="InterPro" id="IPR031157">
    <property type="entry name" value="G_TR_CS"/>
</dbReference>
<dbReference type="InterPro" id="IPR038363">
    <property type="entry name" value="LepA_C_sf"/>
</dbReference>
<dbReference type="InterPro" id="IPR013842">
    <property type="entry name" value="LepA_CTD"/>
</dbReference>
<dbReference type="InterPro" id="IPR035654">
    <property type="entry name" value="LepA_IV"/>
</dbReference>
<dbReference type="InterPro" id="IPR027417">
    <property type="entry name" value="P-loop_NTPase"/>
</dbReference>
<dbReference type="InterPro" id="IPR005225">
    <property type="entry name" value="Small_GTP-bd"/>
</dbReference>
<dbReference type="InterPro" id="IPR000795">
    <property type="entry name" value="T_Tr_GTP-bd_dom"/>
</dbReference>
<dbReference type="InterPro" id="IPR009000">
    <property type="entry name" value="Transl_B-barrel_sf"/>
</dbReference>
<dbReference type="NCBIfam" id="TIGR01393">
    <property type="entry name" value="lepA"/>
    <property type="match status" value="1"/>
</dbReference>
<dbReference type="NCBIfam" id="TIGR00231">
    <property type="entry name" value="small_GTP"/>
    <property type="match status" value="1"/>
</dbReference>
<dbReference type="PANTHER" id="PTHR43512:SF4">
    <property type="entry name" value="TRANSLATION FACTOR GUF1 HOMOLOG, CHLOROPLASTIC"/>
    <property type="match status" value="1"/>
</dbReference>
<dbReference type="PANTHER" id="PTHR43512">
    <property type="entry name" value="TRANSLATION FACTOR GUF1-RELATED"/>
    <property type="match status" value="1"/>
</dbReference>
<dbReference type="Pfam" id="PF00679">
    <property type="entry name" value="EFG_C"/>
    <property type="match status" value="1"/>
</dbReference>
<dbReference type="Pfam" id="PF14492">
    <property type="entry name" value="EFG_III"/>
    <property type="match status" value="1"/>
</dbReference>
<dbReference type="Pfam" id="PF00009">
    <property type="entry name" value="GTP_EFTU"/>
    <property type="match status" value="1"/>
</dbReference>
<dbReference type="Pfam" id="PF03144">
    <property type="entry name" value="GTP_EFTU_D2"/>
    <property type="match status" value="1"/>
</dbReference>
<dbReference type="Pfam" id="PF06421">
    <property type="entry name" value="LepA_C"/>
    <property type="match status" value="1"/>
</dbReference>
<dbReference type="PRINTS" id="PR00315">
    <property type="entry name" value="ELONGATNFCT"/>
</dbReference>
<dbReference type="SMART" id="SM00838">
    <property type="entry name" value="EFG_C"/>
    <property type="match status" value="1"/>
</dbReference>
<dbReference type="SUPFAM" id="SSF54980">
    <property type="entry name" value="EF-G C-terminal domain-like"/>
    <property type="match status" value="2"/>
</dbReference>
<dbReference type="SUPFAM" id="SSF52540">
    <property type="entry name" value="P-loop containing nucleoside triphosphate hydrolases"/>
    <property type="match status" value="1"/>
</dbReference>
<dbReference type="SUPFAM" id="SSF50447">
    <property type="entry name" value="Translation proteins"/>
    <property type="match status" value="1"/>
</dbReference>
<dbReference type="PROSITE" id="PS00301">
    <property type="entry name" value="G_TR_1"/>
    <property type="match status" value="1"/>
</dbReference>
<dbReference type="PROSITE" id="PS51722">
    <property type="entry name" value="G_TR_2"/>
    <property type="match status" value="1"/>
</dbReference>
<protein>
    <recommendedName>
        <fullName evidence="1">Elongation factor 4</fullName>
        <shortName evidence="1">EF-4</shortName>
        <ecNumber evidence="1">3.6.5.n1</ecNumber>
    </recommendedName>
    <alternativeName>
        <fullName evidence="1">Ribosomal back-translocase LepA</fullName>
    </alternativeName>
</protein>
<keyword id="KW-1003">Cell membrane</keyword>
<keyword id="KW-0342">GTP-binding</keyword>
<keyword id="KW-0378">Hydrolase</keyword>
<keyword id="KW-0472">Membrane</keyword>
<keyword id="KW-0547">Nucleotide-binding</keyword>
<keyword id="KW-0648">Protein biosynthesis</keyword>
<keyword id="KW-1185">Reference proteome</keyword>
<reference key="1">
    <citation type="journal article" date="2008" name="Genome Res.">
        <title>The genome of Pelotomaculum thermopropionicum reveals niche-associated evolution in anaerobic microbiota.</title>
        <authorList>
            <person name="Kosaka T."/>
            <person name="Kato S."/>
            <person name="Shimoyama T."/>
            <person name="Ishii S."/>
            <person name="Abe T."/>
            <person name="Watanabe K."/>
        </authorList>
    </citation>
    <scope>NUCLEOTIDE SEQUENCE [LARGE SCALE GENOMIC DNA]</scope>
    <source>
        <strain>DSM 13744 / JCM 10971 / SI</strain>
    </source>
</reference>
<gene>
    <name evidence="1" type="primary">lepA</name>
    <name type="ordered locus">PTH_0873</name>
</gene>
<name>LEPA_PELTS</name>
<sequence>MEWDKDRIRNFCIIAHIDHGKSTLADRLLEYTGALTGREMTEQVLDQMDLERERGITIKMQAVRLNYRARDGRDYQLNLIDTPGHVDFSYEVSRSLAACEGALLVVDAAQGIEAQTLANVYLALEHNLEIIPVINKIDLPSADPERVKKEIEDVIGLDASEAVLASAKSGAGVEEILERIVTRIPPPGGQTGAPLRALIFDSHYDPYKGVVCYVRVVDGSVSNGMQIKMMATGREFEVSEVGIFKPYLASVGELRTGEVGFITAGIKNVKDSRVGDTITEAGRPAPVPLPGYRKATPMVFCGLYPVEAGEYEALKDALAKLKLNDASLTYEPETSEALGFGFRCGFLGLLHMEIIQERLEREYGLNLITTAPNVVYRVKTTAGETIEIENPSKLPPPGKIEFIEEPFVRAVIMAPKDYIGPVMELCQERRGVFTNMEYISVNRVMLNYALPLSEIIYDFFDQLKSRTKGYASLDYELDGYRQSDLVKLDVLIAGEVLDALSVIVHRDKAYQRGRHLVEKLRGLIPRHLFEIPIQAAVGNRIIARETVKAIRKDVLAKCYGGDVTRKRKLLEKQKAGKKRMKQVGRVEIPQEAFMAVLSVGDK</sequence>
<evidence type="ECO:0000255" key="1">
    <source>
        <dbReference type="HAMAP-Rule" id="MF_00071"/>
    </source>
</evidence>